<comment type="function">
    <text evidence="1">Catalyzes the transfer of the enolpyruvyl moiety of phosphoenolpyruvate (PEP) to the 5-hydroxyl of shikimate-3-phosphate (S3P) to produce enolpyruvyl shikimate-3-phosphate and inorganic phosphate.</text>
</comment>
<comment type="catalytic activity">
    <reaction evidence="1">
        <text>3-phosphoshikimate + phosphoenolpyruvate = 5-O-(1-carboxyvinyl)-3-phosphoshikimate + phosphate</text>
        <dbReference type="Rhea" id="RHEA:21256"/>
        <dbReference type="ChEBI" id="CHEBI:43474"/>
        <dbReference type="ChEBI" id="CHEBI:57701"/>
        <dbReference type="ChEBI" id="CHEBI:58702"/>
        <dbReference type="ChEBI" id="CHEBI:145989"/>
        <dbReference type="EC" id="2.5.1.19"/>
    </reaction>
    <physiologicalReaction direction="left-to-right" evidence="1">
        <dbReference type="Rhea" id="RHEA:21257"/>
    </physiologicalReaction>
</comment>
<comment type="pathway">
    <text evidence="1">Metabolic intermediate biosynthesis; chorismate biosynthesis; chorismate from D-erythrose 4-phosphate and phosphoenolpyruvate: step 6/7.</text>
</comment>
<comment type="subunit">
    <text evidence="1">Monomer.</text>
</comment>
<comment type="subcellular location">
    <subcellularLocation>
        <location evidence="1">Cytoplasm</location>
    </subcellularLocation>
</comment>
<comment type="similarity">
    <text evidence="1">Belongs to the EPSP synthase family.</text>
</comment>
<evidence type="ECO:0000255" key="1">
    <source>
        <dbReference type="HAMAP-Rule" id="MF_00210"/>
    </source>
</evidence>
<evidence type="ECO:0000256" key="2">
    <source>
        <dbReference type="SAM" id="MobiDB-lite"/>
    </source>
</evidence>
<accession>Q98CC1</accession>
<name>AROA_RHILO</name>
<sequence length="452" mass="47455">MSHAAAAKPATARKSQALSGTARVPGDKSISHRSFMFGGLASGETRITGLLEGEDVMRTGAAMKAMGAHIEKRGAEWVIRGTGNGALLQPEGPLDFGNAGTGSRLTMGLVGTYDMETTFIGDASLSGRPMGRVLEPLRQMGVQVLKATPGDRMPITLHGPKHAAPITYRVPMASAQVKSAVLLAGLNTPGITTVIEPVMTRDHTEKMLKGFGANLSVETDERGVRHIFIEGQGRLTGQTIAVPGDPSSAGFPLVAALIVPGSDITIENVLMNPTRTGLLLTLQEMGGQIDILNPRNAGGEDVADLRVRYSELKGVAVPPERAPSMIDEYPVLAVAASFAEGETLMQGLEELRVKESDRLSAVANGLKLNGVDCTEGEASLAVRGRPGGKGLGGHPNGLDTTVQTHLDHRIAMSFLVMGLATEKPVTIDDQAMIATSFPEFMGLMTGLGAEIR</sequence>
<organism>
    <name type="scientific">Mesorhizobium japonicum (strain LMG 29417 / CECT 9101 / MAFF 303099)</name>
    <name type="common">Mesorhizobium loti (strain MAFF 303099)</name>
    <dbReference type="NCBI Taxonomy" id="266835"/>
    <lineage>
        <taxon>Bacteria</taxon>
        <taxon>Pseudomonadati</taxon>
        <taxon>Pseudomonadota</taxon>
        <taxon>Alphaproteobacteria</taxon>
        <taxon>Hyphomicrobiales</taxon>
        <taxon>Phyllobacteriaceae</taxon>
        <taxon>Mesorhizobium</taxon>
    </lineage>
</organism>
<reference key="1">
    <citation type="journal article" date="2000" name="DNA Res.">
        <title>Complete genome structure of the nitrogen-fixing symbiotic bacterium Mesorhizobium loti.</title>
        <authorList>
            <person name="Kaneko T."/>
            <person name="Nakamura Y."/>
            <person name="Sato S."/>
            <person name="Asamizu E."/>
            <person name="Kato T."/>
            <person name="Sasamoto S."/>
            <person name="Watanabe A."/>
            <person name="Idesawa K."/>
            <person name="Ishikawa A."/>
            <person name="Kawashima K."/>
            <person name="Kimura T."/>
            <person name="Kishida Y."/>
            <person name="Kiyokawa C."/>
            <person name="Kohara M."/>
            <person name="Matsumoto M."/>
            <person name="Matsuno A."/>
            <person name="Mochizuki Y."/>
            <person name="Nakayama S."/>
            <person name="Nakazaki N."/>
            <person name="Shimpo S."/>
            <person name="Sugimoto M."/>
            <person name="Takeuchi C."/>
            <person name="Yamada M."/>
            <person name="Tabata S."/>
        </authorList>
    </citation>
    <scope>NUCLEOTIDE SEQUENCE [LARGE SCALE GENOMIC DNA]</scope>
    <source>
        <strain>LMG 29417 / CECT 9101 / MAFF 303099</strain>
    </source>
</reference>
<feature type="chain" id="PRO_0000088282" description="3-phosphoshikimate 1-carboxyvinyltransferase">
    <location>
        <begin position="1"/>
        <end position="452"/>
    </location>
</feature>
<feature type="region of interest" description="Disordered" evidence="2">
    <location>
        <begin position="1"/>
        <end position="26"/>
    </location>
</feature>
<feature type="compositionally biased region" description="Low complexity" evidence="2">
    <location>
        <begin position="1"/>
        <end position="17"/>
    </location>
</feature>
<feature type="active site" description="Proton acceptor" evidence="1">
    <location>
        <position position="327"/>
    </location>
</feature>
<feature type="binding site" evidence="1">
    <location>
        <position position="28"/>
    </location>
    <ligand>
        <name>3-phosphoshikimate</name>
        <dbReference type="ChEBI" id="CHEBI:145989"/>
    </ligand>
</feature>
<feature type="binding site" evidence="1">
    <location>
        <position position="28"/>
    </location>
    <ligand>
        <name>phosphoenolpyruvate</name>
        <dbReference type="ChEBI" id="CHEBI:58702"/>
    </ligand>
</feature>
<feature type="binding site" evidence="1">
    <location>
        <position position="29"/>
    </location>
    <ligand>
        <name>3-phosphoshikimate</name>
        <dbReference type="ChEBI" id="CHEBI:145989"/>
    </ligand>
</feature>
<feature type="binding site" evidence="1">
    <location>
        <position position="33"/>
    </location>
    <ligand>
        <name>3-phosphoshikimate</name>
        <dbReference type="ChEBI" id="CHEBI:145989"/>
    </ligand>
</feature>
<feature type="binding site" evidence="1">
    <location>
        <position position="100"/>
    </location>
    <ligand>
        <name>phosphoenolpyruvate</name>
        <dbReference type="ChEBI" id="CHEBI:58702"/>
    </ligand>
</feature>
<feature type="binding site" evidence="1">
    <location>
        <position position="128"/>
    </location>
    <ligand>
        <name>phosphoenolpyruvate</name>
        <dbReference type="ChEBI" id="CHEBI:58702"/>
    </ligand>
</feature>
<feature type="binding site" evidence="1">
    <location>
        <position position="174"/>
    </location>
    <ligand>
        <name>3-phosphoshikimate</name>
        <dbReference type="ChEBI" id="CHEBI:145989"/>
    </ligand>
</feature>
<feature type="binding site" evidence="1">
    <location>
        <position position="176"/>
    </location>
    <ligand>
        <name>3-phosphoshikimate</name>
        <dbReference type="ChEBI" id="CHEBI:145989"/>
    </ligand>
</feature>
<feature type="binding site" evidence="1">
    <location>
        <position position="176"/>
    </location>
    <ligand>
        <name>phosphoenolpyruvate</name>
        <dbReference type="ChEBI" id="CHEBI:58702"/>
    </ligand>
</feature>
<feature type="binding site" evidence="1">
    <location>
        <position position="327"/>
    </location>
    <ligand>
        <name>3-phosphoshikimate</name>
        <dbReference type="ChEBI" id="CHEBI:145989"/>
    </ligand>
</feature>
<feature type="binding site" evidence="1">
    <location>
        <position position="354"/>
    </location>
    <ligand>
        <name>3-phosphoshikimate</name>
        <dbReference type="ChEBI" id="CHEBI:145989"/>
    </ligand>
</feature>
<feature type="binding site" evidence="1">
    <location>
        <position position="358"/>
    </location>
    <ligand>
        <name>phosphoenolpyruvate</name>
        <dbReference type="ChEBI" id="CHEBI:58702"/>
    </ligand>
</feature>
<feature type="binding site" evidence="1">
    <location>
        <position position="409"/>
    </location>
    <ligand>
        <name>phosphoenolpyruvate</name>
        <dbReference type="ChEBI" id="CHEBI:58702"/>
    </ligand>
</feature>
<keyword id="KW-0028">Amino-acid biosynthesis</keyword>
<keyword id="KW-0057">Aromatic amino acid biosynthesis</keyword>
<keyword id="KW-0963">Cytoplasm</keyword>
<keyword id="KW-0808">Transferase</keyword>
<protein>
    <recommendedName>
        <fullName evidence="1">3-phosphoshikimate 1-carboxyvinyltransferase</fullName>
        <ecNumber evidence="1">2.5.1.19</ecNumber>
    </recommendedName>
    <alternativeName>
        <fullName evidence="1">5-enolpyruvylshikimate-3-phosphate synthase</fullName>
        <shortName evidence="1">EPSP synthase</shortName>
        <shortName evidence="1">EPSPS</shortName>
    </alternativeName>
</protein>
<dbReference type="EC" id="2.5.1.19" evidence="1"/>
<dbReference type="EMBL" id="BA000012">
    <property type="protein sequence ID" value="BAB51700.1"/>
    <property type="molecule type" value="Genomic_DNA"/>
</dbReference>
<dbReference type="RefSeq" id="WP_010913039.1">
    <property type="nucleotide sequence ID" value="NC_002678.2"/>
</dbReference>
<dbReference type="SMR" id="Q98CC1"/>
<dbReference type="KEGG" id="mlo:mll5213"/>
<dbReference type="PATRIC" id="fig|266835.9.peg.4127"/>
<dbReference type="eggNOG" id="COG0128">
    <property type="taxonomic scope" value="Bacteria"/>
</dbReference>
<dbReference type="HOGENOM" id="CLU_024321_0_1_5"/>
<dbReference type="UniPathway" id="UPA00053">
    <property type="reaction ID" value="UER00089"/>
</dbReference>
<dbReference type="Proteomes" id="UP000000552">
    <property type="component" value="Chromosome"/>
</dbReference>
<dbReference type="GO" id="GO:0005737">
    <property type="term" value="C:cytoplasm"/>
    <property type="evidence" value="ECO:0007669"/>
    <property type="project" value="UniProtKB-SubCell"/>
</dbReference>
<dbReference type="GO" id="GO:0003866">
    <property type="term" value="F:3-phosphoshikimate 1-carboxyvinyltransferase activity"/>
    <property type="evidence" value="ECO:0007669"/>
    <property type="project" value="UniProtKB-UniRule"/>
</dbReference>
<dbReference type="GO" id="GO:0008652">
    <property type="term" value="P:amino acid biosynthetic process"/>
    <property type="evidence" value="ECO:0007669"/>
    <property type="project" value="UniProtKB-KW"/>
</dbReference>
<dbReference type="GO" id="GO:0009073">
    <property type="term" value="P:aromatic amino acid family biosynthetic process"/>
    <property type="evidence" value="ECO:0007669"/>
    <property type="project" value="UniProtKB-KW"/>
</dbReference>
<dbReference type="GO" id="GO:0009423">
    <property type="term" value="P:chorismate biosynthetic process"/>
    <property type="evidence" value="ECO:0007669"/>
    <property type="project" value="UniProtKB-UniRule"/>
</dbReference>
<dbReference type="CDD" id="cd01556">
    <property type="entry name" value="EPSP_synthase"/>
    <property type="match status" value="1"/>
</dbReference>
<dbReference type="FunFam" id="3.65.10.10:FF:000005">
    <property type="entry name" value="3-phosphoshikimate 1-carboxyvinyltransferase"/>
    <property type="match status" value="1"/>
</dbReference>
<dbReference type="FunFam" id="3.65.10.10:FF:000006">
    <property type="entry name" value="3-phosphoshikimate 1-carboxyvinyltransferase"/>
    <property type="match status" value="1"/>
</dbReference>
<dbReference type="Gene3D" id="3.65.10.10">
    <property type="entry name" value="Enolpyruvate transferase domain"/>
    <property type="match status" value="2"/>
</dbReference>
<dbReference type="HAMAP" id="MF_00210">
    <property type="entry name" value="EPSP_synth"/>
    <property type="match status" value="1"/>
</dbReference>
<dbReference type="InterPro" id="IPR001986">
    <property type="entry name" value="Enolpyruvate_Tfrase_dom"/>
</dbReference>
<dbReference type="InterPro" id="IPR036968">
    <property type="entry name" value="Enolpyruvate_Tfrase_sf"/>
</dbReference>
<dbReference type="InterPro" id="IPR006264">
    <property type="entry name" value="EPSP_synthase"/>
</dbReference>
<dbReference type="InterPro" id="IPR023193">
    <property type="entry name" value="EPSP_synthase_CS"/>
</dbReference>
<dbReference type="InterPro" id="IPR013792">
    <property type="entry name" value="RNA3'P_cycl/enolpyr_Trfase_a/b"/>
</dbReference>
<dbReference type="NCBIfam" id="TIGR01356">
    <property type="entry name" value="aroA"/>
    <property type="match status" value="1"/>
</dbReference>
<dbReference type="PANTHER" id="PTHR21090">
    <property type="entry name" value="AROM/DEHYDROQUINATE SYNTHASE"/>
    <property type="match status" value="1"/>
</dbReference>
<dbReference type="PANTHER" id="PTHR21090:SF5">
    <property type="entry name" value="PENTAFUNCTIONAL AROM POLYPEPTIDE"/>
    <property type="match status" value="1"/>
</dbReference>
<dbReference type="Pfam" id="PF00275">
    <property type="entry name" value="EPSP_synthase"/>
    <property type="match status" value="1"/>
</dbReference>
<dbReference type="PIRSF" id="PIRSF000505">
    <property type="entry name" value="EPSPS"/>
    <property type="match status" value="1"/>
</dbReference>
<dbReference type="SUPFAM" id="SSF55205">
    <property type="entry name" value="EPT/RTPC-like"/>
    <property type="match status" value="1"/>
</dbReference>
<dbReference type="PROSITE" id="PS00104">
    <property type="entry name" value="EPSP_SYNTHASE_1"/>
    <property type="match status" value="1"/>
</dbReference>
<dbReference type="PROSITE" id="PS00885">
    <property type="entry name" value="EPSP_SYNTHASE_2"/>
    <property type="match status" value="1"/>
</dbReference>
<proteinExistence type="inferred from homology"/>
<gene>
    <name evidence="1" type="primary">aroA</name>
    <name type="ordered locus">mll5213</name>
</gene>